<organism>
    <name type="scientific">Chlamydia pneumoniae</name>
    <name type="common">Chlamydophila pneumoniae</name>
    <dbReference type="NCBI Taxonomy" id="83558"/>
    <lineage>
        <taxon>Bacteria</taxon>
        <taxon>Pseudomonadati</taxon>
        <taxon>Chlamydiota</taxon>
        <taxon>Chlamydiia</taxon>
        <taxon>Chlamydiales</taxon>
        <taxon>Chlamydiaceae</taxon>
        <taxon>Chlamydia/Chlamydophila group</taxon>
        <taxon>Chlamydia</taxon>
    </lineage>
</organism>
<name>TGT_CHLPN</name>
<feature type="chain" id="PRO_0000135465" description="Queuine tRNA-ribosyltransferase">
    <location>
        <begin position="1"/>
        <end position="372"/>
    </location>
</feature>
<feature type="region of interest" description="RNA binding" evidence="1">
    <location>
        <begin position="262"/>
        <end position="268"/>
    </location>
</feature>
<feature type="region of interest" description="RNA binding; important for wobble base 34 recognition" evidence="1">
    <location>
        <begin position="286"/>
        <end position="290"/>
    </location>
</feature>
<feature type="active site" description="Proton acceptor" evidence="1">
    <location>
        <position position="89"/>
    </location>
</feature>
<feature type="active site" description="Nucleophile" evidence="1">
    <location>
        <position position="281"/>
    </location>
</feature>
<feature type="binding site" evidence="1">
    <location>
        <begin position="89"/>
        <end position="93"/>
    </location>
    <ligand>
        <name>substrate</name>
    </ligand>
</feature>
<feature type="binding site" evidence="1">
    <location>
        <position position="161"/>
    </location>
    <ligand>
        <name>substrate</name>
    </ligand>
</feature>
<feature type="binding site" evidence="1">
    <location>
        <position position="232"/>
    </location>
    <ligand>
        <name>substrate</name>
    </ligand>
</feature>
<feature type="binding site" evidence="1">
    <location>
        <position position="319"/>
    </location>
    <ligand>
        <name>Zn(2+)</name>
        <dbReference type="ChEBI" id="CHEBI:29105"/>
    </ligand>
</feature>
<feature type="binding site" evidence="1">
    <location>
        <position position="321"/>
    </location>
    <ligand>
        <name>Zn(2+)</name>
        <dbReference type="ChEBI" id="CHEBI:29105"/>
    </ligand>
</feature>
<feature type="binding site" evidence="1">
    <location>
        <position position="324"/>
    </location>
    <ligand>
        <name>Zn(2+)</name>
        <dbReference type="ChEBI" id="CHEBI:29105"/>
    </ligand>
</feature>
<feature type="binding site" evidence="1">
    <location>
        <position position="351"/>
    </location>
    <ligand>
        <name>Zn(2+)</name>
        <dbReference type="ChEBI" id="CHEBI:29105"/>
    </ligand>
</feature>
<sequence>MALKFHLIHQSKKSQARVGQIETSHGVIDTPAFVPVATHGALKGVIDHSDIPLLFCNTYHLLLHPGPEAVAKLGGLHQFMGRQAPIITDSGGFQIFSLAYGSVAEEIKSCGKKKGMSSLVKITDEGAWFKSYRDGRKLFLSPELSVQAQKDLGADIIIPLDELLPFHTDQEYFLTSCSRTYVWEKRSLEYHRKDPRHQSMYGVIHGGLDPEQRRIGVRFVEDEPFDGSAIGGSLGRNLQEMSEVVKITTSFLSKERPVHLLGIGDLPSIYAMVGFGIDSFDSSYPTKAARHGLILSKAGPIKIGQQKYSQDSSTIDPSCSCLTCLSGISRAYLRHLFKVREPNAAIWASIHNLHHMQQVMKEIREAILKDEI</sequence>
<proteinExistence type="inferred from homology"/>
<gene>
    <name evidence="1" type="primary">tgt</name>
    <name type="ordered locus">CPn_0219</name>
    <name type="ordered locus">CP_0546</name>
    <name type="ordered locus">CpB0223</name>
</gene>
<comment type="function">
    <text evidence="1">Catalyzes the base-exchange of a guanine (G) residue with the queuine precursor 7-aminomethyl-7-deazaguanine (PreQ1) at position 34 (anticodon wobble position) in tRNAs with GU(N) anticodons (tRNA-Asp, -Asn, -His and -Tyr). Catalysis occurs through a double-displacement mechanism. The nucleophile active site attacks the C1' of nucleotide 34 to detach the guanine base from the RNA, forming a covalent enzyme-RNA intermediate. The proton acceptor active site deprotonates the incoming PreQ1, allowing a nucleophilic attack on the C1' of the ribose to form the product. After dissociation, two additional enzymatic reactions on the tRNA convert PreQ1 to queuine (Q), resulting in the hypermodified nucleoside queuosine (7-(((4,5-cis-dihydroxy-2-cyclopenten-1-yl)amino)methyl)-7-deazaguanosine).</text>
</comment>
<comment type="catalytic activity">
    <reaction evidence="1">
        <text>7-aminomethyl-7-carbaguanine + guanosine(34) in tRNA = 7-aminomethyl-7-carbaguanosine(34) in tRNA + guanine</text>
        <dbReference type="Rhea" id="RHEA:24104"/>
        <dbReference type="Rhea" id="RHEA-COMP:10341"/>
        <dbReference type="Rhea" id="RHEA-COMP:10342"/>
        <dbReference type="ChEBI" id="CHEBI:16235"/>
        <dbReference type="ChEBI" id="CHEBI:58703"/>
        <dbReference type="ChEBI" id="CHEBI:74269"/>
        <dbReference type="ChEBI" id="CHEBI:82833"/>
        <dbReference type="EC" id="2.4.2.29"/>
    </reaction>
</comment>
<comment type="cofactor">
    <cofactor evidence="1">
        <name>Zn(2+)</name>
        <dbReference type="ChEBI" id="CHEBI:29105"/>
    </cofactor>
    <text evidence="1">Binds 1 zinc ion per subunit.</text>
</comment>
<comment type="pathway">
    <text evidence="1">tRNA modification; tRNA-queuosine biosynthesis.</text>
</comment>
<comment type="subunit">
    <text evidence="1">Homodimer. Within each dimer, one monomer is responsible for RNA recognition and catalysis, while the other monomer binds to the replacement base PreQ1.</text>
</comment>
<comment type="similarity">
    <text evidence="1">Belongs to the queuine tRNA-ribosyltransferase family.</text>
</comment>
<evidence type="ECO:0000255" key="1">
    <source>
        <dbReference type="HAMAP-Rule" id="MF_00168"/>
    </source>
</evidence>
<reference key="1">
    <citation type="journal article" date="1999" name="Nat. Genet.">
        <title>Comparative genomes of Chlamydia pneumoniae and C. trachomatis.</title>
        <authorList>
            <person name="Kalman S."/>
            <person name="Mitchell W.P."/>
            <person name="Marathe R."/>
            <person name="Lammel C.J."/>
            <person name="Fan J."/>
            <person name="Hyman R.W."/>
            <person name="Olinger L."/>
            <person name="Grimwood J."/>
            <person name="Davis R.W."/>
            <person name="Stephens R.S."/>
        </authorList>
    </citation>
    <scope>NUCLEOTIDE SEQUENCE [LARGE SCALE GENOMIC DNA]</scope>
    <source>
        <strain>CWL029</strain>
    </source>
</reference>
<reference key="2">
    <citation type="journal article" date="2000" name="Nucleic Acids Res.">
        <title>Genome sequences of Chlamydia trachomatis MoPn and Chlamydia pneumoniae AR39.</title>
        <authorList>
            <person name="Read T.D."/>
            <person name="Brunham R.C."/>
            <person name="Shen C."/>
            <person name="Gill S.R."/>
            <person name="Heidelberg J.F."/>
            <person name="White O."/>
            <person name="Hickey E.K."/>
            <person name="Peterson J.D."/>
            <person name="Utterback T.R."/>
            <person name="Berry K.J."/>
            <person name="Bass S."/>
            <person name="Linher K.D."/>
            <person name="Weidman J.F."/>
            <person name="Khouri H.M."/>
            <person name="Craven B."/>
            <person name="Bowman C."/>
            <person name="Dodson R.J."/>
            <person name="Gwinn M.L."/>
            <person name="Nelson W.C."/>
            <person name="DeBoy R.T."/>
            <person name="Kolonay J.F."/>
            <person name="McClarty G."/>
            <person name="Salzberg S.L."/>
            <person name="Eisen J.A."/>
            <person name="Fraser C.M."/>
        </authorList>
    </citation>
    <scope>NUCLEOTIDE SEQUENCE [LARGE SCALE GENOMIC DNA]</scope>
    <source>
        <strain>AR39</strain>
    </source>
</reference>
<reference key="3">
    <citation type="journal article" date="2000" name="Nucleic Acids Res.">
        <title>Comparison of whole genome sequences of Chlamydia pneumoniae J138 from Japan and CWL029 from USA.</title>
        <authorList>
            <person name="Shirai M."/>
            <person name="Hirakawa H."/>
            <person name="Kimoto M."/>
            <person name="Tabuchi M."/>
            <person name="Kishi F."/>
            <person name="Ouchi K."/>
            <person name="Shiba T."/>
            <person name="Ishii K."/>
            <person name="Hattori M."/>
            <person name="Kuhara S."/>
            <person name="Nakazawa T."/>
        </authorList>
    </citation>
    <scope>NUCLEOTIDE SEQUENCE [LARGE SCALE GENOMIC DNA]</scope>
    <source>
        <strain>J138</strain>
    </source>
</reference>
<reference key="4">
    <citation type="submission" date="2002-05" db="EMBL/GenBank/DDBJ databases">
        <title>The genome sequence of Chlamydia pneumoniae TW183 and comparison with other Chlamydia strains based on whole genome sequence analysis.</title>
        <authorList>
            <person name="Geng M.M."/>
            <person name="Schuhmacher A."/>
            <person name="Muehldorfer I."/>
            <person name="Bensch K.W."/>
            <person name="Schaefer K.P."/>
            <person name="Schneider S."/>
            <person name="Pohl T."/>
            <person name="Essig A."/>
            <person name="Marre R."/>
            <person name="Melchers K."/>
        </authorList>
    </citation>
    <scope>NUCLEOTIDE SEQUENCE [LARGE SCALE GENOMIC DNA]</scope>
    <source>
        <strain>TW-183</strain>
    </source>
</reference>
<keyword id="KW-0328">Glycosyltransferase</keyword>
<keyword id="KW-0479">Metal-binding</keyword>
<keyword id="KW-0671">Queuosine biosynthesis</keyword>
<keyword id="KW-0808">Transferase</keyword>
<keyword id="KW-0819">tRNA processing</keyword>
<keyword id="KW-0862">Zinc</keyword>
<accession>Q9Z8W5</accession>
<accession>Q9JQ73</accession>
<protein>
    <recommendedName>
        <fullName evidence="1">Queuine tRNA-ribosyltransferase</fullName>
        <ecNumber evidence="1">2.4.2.29</ecNumber>
    </recommendedName>
    <alternativeName>
        <fullName evidence="1">Guanine insertion enzyme</fullName>
    </alternativeName>
    <alternativeName>
        <fullName evidence="1">tRNA-guanine transglycosylase</fullName>
    </alternativeName>
</protein>
<dbReference type="EC" id="2.4.2.29" evidence="1"/>
<dbReference type="EMBL" id="AE001363">
    <property type="protein sequence ID" value="AAD18372.1"/>
    <property type="molecule type" value="Genomic_DNA"/>
</dbReference>
<dbReference type="EMBL" id="AE002161">
    <property type="protein sequence ID" value="AAF38368.1"/>
    <property type="molecule type" value="Genomic_DNA"/>
</dbReference>
<dbReference type="EMBL" id="BA000008">
    <property type="protein sequence ID" value="BAA98429.1"/>
    <property type="molecule type" value="Genomic_DNA"/>
</dbReference>
<dbReference type="EMBL" id="AE009440">
    <property type="protein sequence ID" value="AAP98156.1"/>
    <property type="molecule type" value="Genomic_DNA"/>
</dbReference>
<dbReference type="PIR" id="B72104">
    <property type="entry name" value="B72104"/>
</dbReference>
<dbReference type="PIR" id="C86518">
    <property type="entry name" value="C86518"/>
</dbReference>
<dbReference type="RefSeq" id="NP_224428.1">
    <property type="nucleotide sequence ID" value="NC_000922.1"/>
</dbReference>
<dbReference type="RefSeq" id="WP_010882870.1">
    <property type="nucleotide sequence ID" value="NZ_LN847257.1"/>
</dbReference>
<dbReference type="SMR" id="Q9Z8W5"/>
<dbReference type="STRING" id="406984.CPK_ORF00725"/>
<dbReference type="GeneID" id="45050264"/>
<dbReference type="KEGG" id="cpa:CP_0546"/>
<dbReference type="KEGG" id="cpj:tgt"/>
<dbReference type="KEGG" id="cpn:CPn_0219"/>
<dbReference type="KEGG" id="cpt:CpB0223"/>
<dbReference type="PATRIC" id="fig|115713.3.peg.246"/>
<dbReference type="eggNOG" id="COG0343">
    <property type="taxonomic scope" value="Bacteria"/>
</dbReference>
<dbReference type="HOGENOM" id="CLU_022060_0_2_0"/>
<dbReference type="OrthoDB" id="9805417at2"/>
<dbReference type="UniPathway" id="UPA00392"/>
<dbReference type="Proteomes" id="UP000000583">
    <property type="component" value="Chromosome"/>
</dbReference>
<dbReference type="Proteomes" id="UP000000801">
    <property type="component" value="Chromosome"/>
</dbReference>
<dbReference type="GO" id="GO:0046872">
    <property type="term" value="F:metal ion binding"/>
    <property type="evidence" value="ECO:0007669"/>
    <property type="project" value="UniProtKB-KW"/>
</dbReference>
<dbReference type="GO" id="GO:0008479">
    <property type="term" value="F:tRNA-guanosine(34) queuine transglycosylase activity"/>
    <property type="evidence" value="ECO:0007669"/>
    <property type="project" value="UniProtKB-UniRule"/>
</dbReference>
<dbReference type="GO" id="GO:0008616">
    <property type="term" value="P:queuosine biosynthetic process"/>
    <property type="evidence" value="ECO:0007669"/>
    <property type="project" value="UniProtKB-UniRule"/>
</dbReference>
<dbReference type="GO" id="GO:0101030">
    <property type="term" value="P:tRNA-guanine transglycosylation"/>
    <property type="evidence" value="ECO:0007669"/>
    <property type="project" value="InterPro"/>
</dbReference>
<dbReference type="Gene3D" id="3.20.20.105">
    <property type="entry name" value="Queuine tRNA-ribosyltransferase-like"/>
    <property type="match status" value="1"/>
</dbReference>
<dbReference type="HAMAP" id="MF_00168">
    <property type="entry name" value="Q_tRNA_Tgt"/>
    <property type="match status" value="1"/>
</dbReference>
<dbReference type="InterPro" id="IPR004803">
    <property type="entry name" value="TGT"/>
</dbReference>
<dbReference type="InterPro" id="IPR036511">
    <property type="entry name" value="TGT-like_sf"/>
</dbReference>
<dbReference type="InterPro" id="IPR002616">
    <property type="entry name" value="tRNA_ribo_trans-like"/>
</dbReference>
<dbReference type="NCBIfam" id="TIGR00430">
    <property type="entry name" value="Q_tRNA_tgt"/>
    <property type="match status" value="1"/>
</dbReference>
<dbReference type="NCBIfam" id="TIGR00449">
    <property type="entry name" value="tgt_general"/>
    <property type="match status" value="1"/>
</dbReference>
<dbReference type="PANTHER" id="PTHR43468">
    <property type="match status" value="1"/>
</dbReference>
<dbReference type="PANTHER" id="PTHR43468:SF1">
    <property type="entry name" value="TRNA-GUANOSINE(34) QUEUINE TRANSGLYCOSYLASE"/>
    <property type="match status" value="1"/>
</dbReference>
<dbReference type="Pfam" id="PF01702">
    <property type="entry name" value="TGT"/>
    <property type="match status" value="1"/>
</dbReference>
<dbReference type="SUPFAM" id="SSF51713">
    <property type="entry name" value="tRNA-guanine transglycosylase"/>
    <property type="match status" value="1"/>
</dbReference>